<organism>
    <name type="scientific">Lytechinus pictus</name>
    <name type="common">Painted sea urchin</name>
    <dbReference type="NCBI Taxonomy" id="7653"/>
    <lineage>
        <taxon>Eukaryota</taxon>
        <taxon>Metazoa</taxon>
        <taxon>Echinodermata</taxon>
        <taxon>Eleutherozoa</taxon>
        <taxon>Echinozoa</taxon>
        <taxon>Echinoidea</taxon>
        <taxon>Euechinoidea</taxon>
        <taxon>Echinacea</taxon>
        <taxon>Temnopleuroida</taxon>
        <taxon>Toxopneustidae</taxon>
        <taxon>Lytechinus</taxon>
    </lineage>
</organism>
<feature type="chain" id="PRO_0000055249" description="Histone H2A, sperm">
    <location>
        <begin position="1" status="less than"/>
        <end position="112"/>
    </location>
</feature>
<feature type="modified residue" description="N5-methylglutamine" evidence="1">
    <location>
        <position position="91"/>
    </location>
</feature>
<feature type="cross-link" description="Glycyl lysine isopeptide (Lys-Gly) (interchain with G-Cter in ubiquitin)" evidence="1">
    <location>
        <position position="106"/>
    </location>
</feature>
<feature type="non-terminal residue">
    <location>
        <position position="1"/>
    </location>
</feature>
<protein>
    <recommendedName>
        <fullName>Histone H2A, sperm</fullName>
    </recommendedName>
</protein>
<evidence type="ECO:0000250" key="1"/>
<evidence type="ECO:0000305" key="2"/>
<accession>P09589</accession>
<dbReference type="EMBL" id="M13637">
    <property type="protein sequence ID" value="AAA30000.1"/>
    <property type="molecule type" value="mRNA"/>
</dbReference>
<dbReference type="PIR" id="D25381">
    <property type="entry name" value="HSURA2"/>
</dbReference>
<dbReference type="SMR" id="P09589"/>
<dbReference type="OrthoDB" id="10253031at2759"/>
<dbReference type="GO" id="GO:0000786">
    <property type="term" value="C:nucleosome"/>
    <property type="evidence" value="ECO:0007669"/>
    <property type="project" value="UniProtKB-KW"/>
</dbReference>
<dbReference type="GO" id="GO:0005634">
    <property type="term" value="C:nucleus"/>
    <property type="evidence" value="ECO:0007669"/>
    <property type="project" value="UniProtKB-SubCell"/>
</dbReference>
<dbReference type="GO" id="GO:0003677">
    <property type="term" value="F:DNA binding"/>
    <property type="evidence" value="ECO:0007669"/>
    <property type="project" value="UniProtKB-KW"/>
</dbReference>
<dbReference type="GO" id="GO:0046982">
    <property type="term" value="F:protein heterodimerization activity"/>
    <property type="evidence" value="ECO:0007669"/>
    <property type="project" value="InterPro"/>
</dbReference>
<dbReference type="GO" id="GO:0030527">
    <property type="term" value="F:structural constituent of chromatin"/>
    <property type="evidence" value="ECO:0007669"/>
    <property type="project" value="InterPro"/>
</dbReference>
<dbReference type="CDD" id="cd00074">
    <property type="entry name" value="HFD_H2A"/>
    <property type="match status" value="1"/>
</dbReference>
<dbReference type="FunFam" id="1.10.20.10:FF:000004">
    <property type="entry name" value="Histone H2A"/>
    <property type="match status" value="1"/>
</dbReference>
<dbReference type="Gene3D" id="1.10.20.10">
    <property type="entry name" value="Histone, subunit A"/>
    <property type="match status" value="1"/>
</dbReference>
<dbReference type="InterPro" id="IPR009072">
    <property type="entry name" value="Histone-fold"/>
</dbReference>
<dbReference type="InterPro" id="IPR002119">
    <property type="entry name" value="Histone_H2A"/>
</dbReference>
<dbReference type="InterPro" id="IPR007125">
    <property type="entry name" value="Histone_H2A/H2B/H3"/>
</dbReference>
<dbReference type="InterPro" id="IPR032454">
    <property type="entry name" value="Histone_H2A_C"/>
</dbReference>
<dbReference type="InterPro" id="IPR032458">
    <property type="entry name" value="Histone_H2A_CS"/>
</dbReference>
<dbReference type="PANTHER" id="PTHR23430">
    <property type="entry name" value="HISTONE H2A"/>
    <property type="match status" value="1"/>
</dbReference>
<dbReference type="Pfam" id="PF00125">
    <property type="entry name" value="Histone"/>
    <property type="match status" value="1"/>
</dbReference>
<dbReference type="Pfam" id="PF16211">
    <property type="entry name" value="Histone_H2A_C"/>
    <property type="match status" value="1"/>
</dbReference>
<dbReference type="PRINTS" id="PR00620">
    <property type="entry name" value="HISTONEH2A"/>
</dbReference>
<dbReference type="SMART" id="SM00414">
    <property type="entry name" value="H2A"/>
    <property type="match status" value="1"/>
</dbReference>
<dbReference type="SUPFAM" id="SSF47113">
    <property type="entry name" value="Histone-fold"/>
    <property type="match status" value="1"/>
</dbReference>
<dbReference type="PROSITE" id="PS00046">
    <property type="entry name" value="HISTONE_H2A"/>
    <property type="match status" value="1"/>
</dbReference>
<reference key="1">
    <citation type="journal article" date="1986" name="Mol. Cell. Biol.">
        <title>Analysis of histone gene expression in adult tissues of the sea urchins Strongylocentrotus purpuratus and Lytechinus pictus: tissue-specific expression of sperm histone genes.</title>
        <authorList>
            <person name="Lieber T."/>
            <person name="Weisser K."/>
            <person name="Childs G."/>
        </authorList>
    </citation>
    <scope>NUCLEOTIDE SEQUENCE [MRNA]</scope>
    <source>
        <tissue>Testis</tissue>
    </source>
</reference>
<sequence length="112" mass="12069">AKSRSSRAGLQFPVGRVHRFLRKGNYAQRVGAGAPVYLAAVFEYLAAEILELAGNAAPDNKKTRIIPRHLQLAIRNDEELNKLLGGVTIAQGGVLPNIQAVLLPKKTAKSSK</sequence>
<proteinExistence type="evidence at transcript level"/>
<comment type="function">
    <text>Core component of nucleosome. Nucleosomes wrap and compact DNA into chromatin, limiting DNA accessibility to the cellular machineries which require DNA as a template. Histones thereby play a central role in transcription regulation, DNA repair, DNA replication and chromosomal stability. DNA accessibility is regulated via a complex set of post-translational modifications of histones, also called histone code, and nucleosome remodeling.</text>
</comment>
<comment type="subunit">
    <text>The nucleosome is a histone octamer containing two molecules each of H2A, H2B, H3 and H4 assembled in one H3-H4 heterotetramer and two H2A-H2B heterodimers. The octamer wraps approximately 147 bp of DNA.</text>
</comment>
<comment type="subcellular location">
    <subcellularLocation>
        <location>Nucleus</location>
    </subcellularLocation>
    <subcellularLocation>
        <location>Chromosome</location>
    </subcellularLocation>
</comment>
<comment type="PTM">
    <text evidence="1">Monoubiquitination gives a specific tag for epigenetic transcriptional repression.</text>
</comment>
<comment type="similarity">
    <text evidence="2">Belongs to the histone H2A family.</text>
</comment>
<name>H2A3_LYTPI</name>
<keyword id="KW-0158">Chromosome</keyword>
<keyword id="KW-0238">DNA-binding</keyword>
<keyword id="KW-1017">Isopeptide bond</keyword>
<keyword id="KW-0488">Methylation</keyword>
<keyword id="KW-0544">Nucleosome core</keyword>
<keyword id="KW-0539">Nucleus</keyword>
<keyword id="KW-0832">Ubl conjugation</keyword>